<evidence type="ECO:0000255" key="1">
    <source>
        <dbReference type="HAMAP-Rule" id="MF_00406"/>
    </source>
</evidence>
<name>FABZ_ECODH</name>
<organism>
    <name type="scientific">Escherichia coli (strain K12 / DH10B)</name>
    <dbReference type="NCBI Taxonomy" id="316385"/>
    <lineage>
        <taxon>Bacteria</taxon>
        <taxon>Pseudomonadati</taxon>
        <taxon>Pseudomonadota</taxon>
        <taxon>Gammaproteobacteria</taxon>
        <taxon>Enterobacterales</taxon>
        <taxon>Enterobacteriaceae</taxon>
        <taxon>Escherichia</taxon>
    </lineage>
</organism>
<keyword id="KW-0963">Cytoplasm</keyword>
<keyword id="KW-0441">Lipid A biosynthesis</keyword>
<keyword id="KW-0444">Lipid biosynthesis</keyword>
<keyword id="KW-0443">Lipid metabolism</keyword>
<keyword id="KW-0456">Lyase</keyword>
<proteinExistence type="inferred from homology"/>
<sequence>MTTNTHTLQIEEILELLPHRFPFLLVDRVLDFEEGRFLRAVKNVSVNEPFFQGHFPGKPIFPGVLILEAMAQATGILAFKSVGKLEPGELYYFAGIDEARFKRPVVPGDQMIMEVTFEKTRRGLTRFKGVALVDGKVVCEATMMCARSREA</sequence>
<feature type="chain" id="PRO_1000197296" description="3-hydroxyacyl-[acyl-carrier-protein] dehydratase FabZ">
    <location>
        <begin position="1"/>
        <end position="151"/>
    </location>
</feature>
<feature type="active site" evidence="1">
    <location>
        <position position="54"/>
    </location>
</feature>
<protein>
    <recommendedName>
        <fullName evidence="1">3-hydroxyacyl-[acyl-carrier-protein] dehydratase FabZ</fullName>
        <ecNumber evidence="1">4.2.1.59</ecNumber>
    </recommendedName>
    <alternativeName>
        <fullName evidence="1">(3R)-hydroxymyristoyl-[acyl-carrier-protein] dehydratase</fullName>
        <shortName evidence="1">(3R)-hydroxymyristoyl-ACP dehydrase</shortName>
    </alternativeName>
    <alternativeName>
        <fullName evidence="1">Beta-hydroxyacyl-ACP dehydratase</fullName>
    </alternativeName>
</protein>
<gene>
    <name evidence="1" type="primary">fabZ</name>
    <name type="ordered locus">ECDH10B_0160</name>
</gene>
<comment type="function">
    <text evidence="1">Involved in unsaturated fatty acids biosynthesis. Catalyzes the dehydration of short chain beta-hydroxyacyl-ACPs and long chain saturated and unsaturated beta-hydroxyacyl-ACPs.</text>
</comment>
<comment type="catalytic activity">
    <reaction evidence="1">
        <text>a (3R)-hydroxyacyl-[ACP] = a (2E)-enoyl-[ACP] + H2O</text>
        <dbReference type="Rhea" id="RHEA:13097"/>
        <dbReference type="Rhea" id="RHEA-COMP:9925"/>
        <dbReference type="Rhea" id="RHEA-COMP:9945"/>
        <dbReference type="ChEBI" id="CHEBI:15377"/>
        <dbReference type="ChEBI" id="CHEBI:78784"/>
        <dbReference type="ChEBI" id="CHEBI:78827"/>
        <dbReference type="EC" id="4.2.1.59"/>
    </reaction>
</comment>
<comment type="subunit">
    <text evidence="1">Oligomer.</text>
</comment>
<comment type="subcellular location">
    <subcellularLocation>
        <location evidence="1">Cytoplasm</location>
    </subcellularLocation>
</comment>
<comment type="PTM">
    <text evidence="1">The N-terminus is blocked.</text>
</comment>
<comment type="similarity">
    <text evidence="1">Belongs to the thioester dehydratase family. FabZ subfamily.</text>
</comment>
<reference key="1">
    <citation type="journal article" date="2008" name="J. Bacteriol.">
        <title>The complete genome sequence of Escherichia coli DH10B: insights into the biology of a laboratory workhorse.</title>
        <authorList>
            <person name="Durfee T."/>
            <person name="Nelson R."/>
            <person name="Baldwin S."/>
            <person name="Plunkett G. III"/>
            <person name="Burland V."/>
            <person name="Mau B."/>
            <person name="Petrosino J.F."/>
            <person name="Qin X."/>
            <person name="Muzny D.M."/>
            <person name="Ayele M."/>
            <person name="Gibbs R.A."/>
            <person name="Csorgo B."/>
            <person name="Posfai G."/>
            <person name="Weinstock G.M."/>
            <person name="Blattner F.R."/>
        </authorList>
    </citation>
    <scope>NUCLEOTIDE SEQUENCE [LARGE SCALE GENOMIC DNA]</scope>
    <source>
        <strain>K12 / DH10B</strain>
    </source>
</reference>
<accession>B1XD49</accession>
<dbReference type="EC" id="4.2.1.59" evidence="1"/>
<dbReference type="EMBL" id="CP000948">
    <property type="protein sequence ID" value="ACB01358.1"/>
    <property type="molecule type" value="Genomic_DNA"/>
</dbReference>
<dbReference type="RefSeq" id="WP_000210739.1">
    <property type="nucleotide sequence ID" value="NC_010473.1"/>
</dbReference>
<dbReference type="SMR" id="B1XD49"/>
<dbReference type="GeneID" id="93777245"/>
<dbReference type="KEGG" id="ecd:ECDH10B_0160"/>
<dbReference type="HOGENOM" id="CLU_078912_1_0_6"/>
<dbReference type="GO" id="GO:0005737">
    <property type="term" value="C:cytoplasm"/>
    <property type="evidence" value="ECO:0007669"/>
    <property type="project" value="UniProtKB-SubCell"/>
</dbReference>
<dbReference type="GO" id="GO:0016020">
    <property type="term" value="C:membrane"/>
    <property type="evidence" value="ECO:0007669"/>
    <property type="project" value="GOC"/>
</dbReference>
<dbReference type="GO" id="GO:0019171">
    <property type="term" value="F:(3R)-hydroxyacyl-[acyl-carrier-protein] dehydratase activity"/>
    <property type="evidence" value="ECO:0007669"/>
    <property type="project" value="UniProtKB-EC"/>
</dbReference>
<dbReference type="GO" id="GO:0006633">
    <property type="term" value="P:fatty acid biosynthetic process"/>
    <property type="evidence" value="ECO:0007669"/>
    <property type="project" value="UniProtKB-UniRule"/>
</dbReference>
<dbReference type="GO" id="GO:0009245">
    <property type="term" value="P:lipid A biosynthetic process"/>
    <property type="evidence" value="ECO:0007669"/>
    <property type="project" value="UniProtKB-UniRule"/>
</dbReference>
<dbReference type="CDD" id="cd01288">
    <property type="entry name" value="FabZ"/>
    <property type="match status" value="1"/>
</dbReference>
<dbReference type="FunFam" id="3.10.129.10:FF:000001">
    <property type="entry name" value="3-hydroxyacyl-[acyl-carrier-protein] dehydratase FabZ"/>
    <property type="match status" value="1"/>
</dbReference>
<dbReference type="Gene3D" id="3.10.129.10">
    <property type="entry name" value="Hotdog Thioesterase"/>
    <property type="match status" value="1"/>
</dbReference>
<dbReference type="HAMAP" id="MF_00406">
    <property type="entry name" value="FabZ"/>
    <property type="match status" value="1"/>
</dbReference>
<dbReference type="InterPro" id="IPR013114">
    <property type="entry name" value="FabA_FabZ"/>
</dbReference>
<dbReference type="InterPro" id="IPR010084">
    <property type="entry name" value="FabZ"/>
</dbReference>
<dbReference type="InterPro" id="IPR029069">
    <property type="entry name" value="HotDog_dom_sf"/>
</dbReference>
<dbReference type="NCBIfam" id="TIGR01750">
    <property type="entry name" value="fabZ"/>
    <property type="match status" value="1"/>
</dbReference>
<dbReference type="NCBIfam" id="NF000582">
    <property type="entry name" value="PRK00006.1"/>
    <property type="match status" value="1"/>
</dbReference>
<dbReference type="PANTHER" id="PTHR30272">
    <property type="entry name" value="3-HYDROXYACYL-[ACYL-CARRIER-PROTEIN] DEHYDRATASE"/>
    <property type="match status" value="1"/>
</dbReference>
<dbReference type="PANTHER" id="PTHR30272:SF1">
    <property type="entry name" value="3-HYDROXYACYL-[ACYL-CARRIER-PROTEIN] DEHYDRATASE"/>
    <property type="match status" value="1"/>
</dbReference>
<dbReference type="Pfam" id="PF07977">
    <property type="entry name" value="FabA"/>
    <property type="match status" value="1"/>
</dbReference>
<dbReference type="SUPFAM" id="SSF54637">
    <property type="entry name" value="Thioesterase/thiol ester dehydrase-isomerase"/>
    <property type="match status" value="1"/>
</dbReference>